<sequence>MAIYAIGDVQGCYAELRRLLELIRFDPAKDRLLFTGDLVNRGPQSLETLRFIRGLGPAAATVLGNHDLHLLAVACGVSRVKHKDTFGDVLEAADRDELLAWLRTRPLVHREGSYCLVHAGIPPAWNAETAMARAGEVETVLAAGDITGFCRQMYGDKPDLWSDDLAGWDRLRFITNALTRMRYCDRTGRLDFRQKGAPGRQPASLVPWFDVPDRVPPGATIVFGHWSTLGYFAGKDCYCLDTGCLWGGELTALKLDGTLERYAVPSLHGGYQKPTLAK</sequence>
<protein>
    <recommendedName>
        <fullName evidence="1">Bis(5'-nucleosyl)-tetraphosphatase, symmetrical</fullName>
        <ecNumber evidence="1">3.6.1.41</ecNumber>
    </recommendedName>
    <alternativeName>
        <fullName evidence="1">Ap4A hydrolase</fullName>
    </alternativeName>
    <alternativeName>
        <fullName evidence="1">Diadenosine 5',5'''-P1,P4-tetraphosphate pyrophosphohydrolase</fullName>
    </alternativeName>
    <alternativeName>
        <fullName evidence="1">Diadenosine tetraphosphatase</fullName>
    </alternativeName>
</protein>
<reference key="1">
    <citation type="journal article" date="2004" name="PLoS Biol.">
        <title>Genomic insights into methanotrophy: the complete genome sequence of Methylococcus capsulatus (Bath).</title>
        <authorList>
            <person name="Ward N.L."/>
            <person name="Larsen O."/>
            <person name="Sakwa J."/>
            <person name="Bruseth L."/>
            <person name="Khouri H.M."/>
            <person name="Durkin A.S."/>
            <person name="Dimitrov G."/>
            <person name="Jiang L."/>
            <person name="Scanlan D."/>
            <person name="Kang K.H."/>
            <person name="Lewis M.R."/>
            <person name="Nelson K.E."/>
            <person name="Methe B.A."/>
            <person name="Wu M."/>
            <person name="Heidelberg J.F."/>
            <person name="Paulsen I.T."/>
            <person name="Fouts D.E."/>
            <person name="Ravel J."/>
            <person name="Tettelin H."/>
            <person name="Ren Q."/>
            <person name="Read T.D."/>
            <person name="DeBoy R.T."/>
            <person name="Seshadri R."/>
            <person name="Salzberg S.L."/>
            <person name="Jensen H.B."/>
            <person name="Birkeland N.K."/>
            <person name="Nelson W.C."/>
            <person name="Dodson R.J."/>
            <person name="Grindhaug S.H."/>
            <person name="Holt I.E."/>
            <person name="Eidhammer I."/>
            <person name="Jonasen I."/>
            <person name="Vanaken S."/>
            <person name="Utterback T.R."/>
            <person name="Feldblyum T.V."/>
            <person name="Fraser C.M."/>
            <person name="Lillehaug J.R."/>
            <person name="Eisen J.A."/>
        </authorList>
    </citation>
    <scope>NUCLEOTIDE SEQUENCE [LARGE SCALE GENOMIC DNA]</scope>
    <source>
        <strain>ATCC 33009 / NCIMB 11132 / Bath</strain>
    </source>
</reference>
<dbReference type="EC" id="3.6.1.41" evidence="1"/>
<dbReference type="EMBL" id="AE017282">
    <property type="protein sequence ID" value="AAU90598.1"/>
    <property type="molecule type" value="Genomic_DNA"/>
</dbReference>
<dbReference type="RefSeq" id="WP_010959527.1">
    <property type="nucleotide sequence ID" value="NC_002977.6"/>
</dbReference>
<dbReference type="SMR" id="Q60CE9"/>
<dbReference type="STRING" id="243233.MCA0159"/>
<dbReference type="GeneID" id="88222508"/>
<dbReference type="KEGG" id="mca:MCA0159"/>
<dbReference type="eggNOG" id="COG0639">
    <property type="taxonomic scope" value="Bacteria"/>
</dbReference>
<dbReference type="HOGENOM" id="CLU_056184_2_0_6"/>
<dbReference type="Proteomes" id="UP000006821">
    <property type="component" value="Chromosome"/>
</dbReference>
<dbReference type="GO" id="GO:0008803">
    <property type="term" value="F:bis(5'-nucleosyl)-tetraphosphatase (symmetrical) activity"/>
    <property type="evidence" value="ECO:0007669"/>
    <property type="project" value="UniProtKB-UniRule"/>
</dbReference>
<dbReference type="CDD" id="cd07422">
    <property type="entry name" value="MPP_ApaH"/>
    <property type="match status" value="1"/>
</dbReference>
<dbReference type="Gene3D" id="3.60.21.10">
    <property type="match status" value="1"/>
</dbReference>
<dbReference type="HAMAP" id="MF_00199">
    <property type="entry name" value="ApaH"/>
    <property type="match status" value="1"/>
</dbReference>
<dbReference type="InterPro" id="IPR004617">
    <property type="entry name" value="ApaH"/>
</dbReference>
<dbReference type="InterPro" id="IPR004843">
    <property type="entry name" value="Calcineurin-like_PHP_ApaH"/>
</dbReference>
<dbReference type="InterPro" id="IPR029052">
    <property type="entry name" value="Metallo-depent_PP-like"/>
</dbReference>
<dbReference type="NCBIfam" id="TIGR00668">
    <property type="entry name" value="apaH"/>
    <property type="match status" value="1"/>
</dbReference>
<dbReference type="NCBIfam" id="NF001204">
    <property type="entry name" value="PRK00166.1"/>
    <property type="match status" value="1"/>
</dbReference>
<dbReference type="PANTHER" id="PTHR40942">
    <property type="match status" value="1"/>
</dbReference>
<dbReference type="PANTHER" id="PTHR40942:SF4">
    <property type="entry name" value="CYTOCHROME C5"/>
    <property type="match status" value="1"/>
</dbReference>
<dbReference type="Pfam" id="PF00149">
    <property type="entry name" value="Metallophos"/>
    <property type="match status" value="1"/>
</dbReference>
<dbReference type="PIRSF" id="PIRSF000903">
    <property type="entry name" value="B5n-ttraPtase_sm"/>
    <property type="match status" value="1"/>
</dbReference>
<dbReference type="SUPFAM" id="SSF56300">
    <property type="entry name" value="Metallo-dependent phosphatases"/>
    <property type="match status" value="1"/>
</dbReference>
<organism>
    <name type="scientific">Methylococcus capsulatus (strain ATCC 33009 / NCIMB 11132 / Bath)</name>
    <dbReference type="NCBI Taxonomy" id="243233"/>
    <lineage>
        <taxon>Bacteria</taxon>
        <taxon>Pseudomonadati</taxon>
        <taxon>Pseudomonadota</taxon>
        <taxon>Gammaproteobacteria</taxon>
        <taxon>Methylococcales</taxon>
        <taxon>Methylococcaceae</taxon>
        <taxon>Methylococcus</taxon>
    </lineage>
</organism>
<evidence type="ECO:0000255" key="1">
    <source>
        <dbReference type="HAMAP-Rule" id="MF_00199"/>
    </source>
</evidence>
<comment type="function">
    <text evidence="1">Hydrolyzes diadenosine 5',5'''-P1,P4-tetraphosphate to yield ADP.</text>
</comment>
<comment type="catalytic activity">
    <reaction evidence="1">
        <text>P(1),P(4)-bis(5'-adenosyl) tetraphosphate + H2O = 2 ADP + 2 H(+)</text>
        <dbReference type="Rhea" id="RHEA:24252"/>
        <dbReference type="ChEBI" id="CHEBI:15377"/>
        <dbReference type="ChEBI" id="CHEBI:15378"/>
        <dbReference type="ChEBI" id="CHEBI:58141"/>
        <dbReference type="ChEBI" id="CHEBI:456216"/>
        <dbReference type="EC" id="3.6.1.41"/>
    </reaction>
</comment>
<comment type="similarity">
    <text evidence="1">Belongs to the Ap4A hydrolase family.</text>
</comment>
<name>APAH_METCA</name>
<gene>
    <name evidence="1" type="primary">apaH</name>
    <name type="ordered locus">MCA0159</name>
</gene>
<keyword id="KW-0378">Hydrolase</keyword>
<keyword id="KW-1185">Reference proteome</keyword>
<accession>Q60CE9</accession>
<proteinExistence type="inferred from homology"/>
<feature type="chain" id="PRO_1000012069" description="Bis(5'-nucleosyl)-tetraphosphatase, symmetrical">
    <location>
        <begin position="1"/>
        <end position="278"/>
    </location>
</feature>